<dbReference type="EC" id="6.3.2.-" evidence="1"/>
<dbReference type="EMBL" id="AE005174">
    <property type="protein sequence ID" value="AAG59356.1"/>
    <property type="status" value="ALT_INIT"/>
    <property type="molecule type" value="Genomic_DNA"/>
</dbReference>
<dbReference type="EMBL" id="BA000007">
    <property type="protein sequence ID" value="BAB38559.2"/>
    <property type="molecule type" value="Genomic_DNA"/>
</dbReference>
<dbReference type="RefSeq" id="NP_313163.2">
    <property type="nucleotide sequence ID" value="NC_002695.1"/>
</dbReference>
<dbReference type="RefSeq" id="WP_000004771.1">
    <property type="nucleotide sequence ID" value="NZ_VOAI01000008.1"/>
</dbReference>
<dbReference type="SMR" id="P0A8N9"/>
<dbReference type="STRING" id="155864.Z5763"/>
<dbReference type="GeneID" id="915739"/>
<dbReference type="GeneID" id="93777667"/>
<dbReference type="KEGG" id="ece:Z5763"/>
<dbReference type="KEGG" id="ecs:ECs_5136"/>
<dbReference type="PATRIC" id="fig|386585.9.peg.5369"/>
<dbReference type="eggNOG" id="COG2269">
    <property type="taxonomic scope" value="Bacteria"/>
</dbReference>
<dbReference type="HOGENOM" id="CLU_008255_1_1_6"/>
<dbReference type="OMA" id="EWYRPGF"/>
<dbReference type="Proteomes" id="UP000000558">
    <property type="component" value="Chromosome"/>
</dbReference>
<dbReference type="Proteomes" id="UP000002519">
    <property type="component" value="Chromosome"/>
</dbReference>
<dbReference type="GO" id="GO:0005829">
    <property type="term" value="C:cytosol"/>
    <property type="evidence" value="ECO:0007669"/>
    <property type="project" value="TreeGrafter"/>
</dbReference>
<dbReference type="GO" id="GO:0016880">
    <property type="term" value="F:acid-ammonia (or amide) ligase activity"/>
    <property type="evidence" value="ECO:0007669"/>
    <property type="project" value="UniProtKB-UniRule"/>
</dbReference>
<dbReference type="GO" id="GO:0005524">
    <property type="term" value="F:ATP binding"/>
    <property type="evidence" value="ECO:0007669"/>
    <property type="project" value="UniProtKB-UniRule"/>
</dbReference>
<dbReference type="GO" id="GO:0004824">
    <property type="term" value="F:lysine-tRNA ligase activity"/>
    <property type="evidence" value="ECO:0007669"/>
    <property type="project" value="InterPro"/>
</dbReference>
<dbReference type="GO" id="GO:0000049">
    <property type="term" value="F:tRNA binding"/>
    <property type="evidence" value="ECO:0007669"/>
    <property type="project" value="TreeGrafter"/>
</dbReference>
<dbReference type="GO" id="GO:0006430">
    <property type="term" value="P:lysyl-tRNA aminoacylation"/>
    <property type="evidence" value="ECO:0007669"/>
    <property type="project" value="InterPro"/>
</dbReference>
<dbReference type="FunFam" id="3.30.930.10:FF:000017">
    <property type="entry name" value="Elongation factor P--(R)-beta-lysine ligase"/>
    <property type="match status" value="1"/>
</dbReference>
<dbReference type="Gene3D" id="3.30.930.10">
    <property type="entry name" value="Bira Bifunctional Protein, Domain 2"/>
    <property type="match status" value="1"/>
</dbReference>
<dbReference type="HAMAP" id="MF_00174">
    <property type="entry name" value="EF_P_modif_A"/>
    <property type="match status" value="1"/>
</dbReference>
<dbReference type="InterPro" id="IPR004364">
    <property type="entry name" value="Aa-tRNA-synt_II"/>
</dbReference>
<dbReference type="InterPro" id="IPR006195">
    <property type="entry name" value="aa-tRNA-synth_II"/>
</dbReference>
<dbReference type="InterPro" id="IPR045864">
    <property type="entry name" value="aa-tRNA-synth_II/BPL/LPL"/>
</dbReference>
<dbReference type="InterPro" id="IPR004525">
    <property type="entry name" value="EpmA"/>
</dbReference>
<dbReference type="InterPro" id="IPR018149">
    <property type="entry name" value="Lys-tRNA-synth_II_C"/>
</dbReference>
<dbReference type="NCBIfam" id="TIGR00462">
    <property type="entry name" value="genX"/>
    <property type="match status" value="1"/>
</dbReference>
<dbReference type="NCBIfam" id="NF006828">
    <property type="entry name" value="PRK09350.1"/>
    <property type="match status" value="1"/>
</dbReference>
<dbReference type="PANTHER" id="PTHR42918:SF6">
    <property type="entry name" value="ELONGATION FACTOR P--(R)-BETA-LYSINE LIGASE"/>
    <property type="match status" value="1"/>
</dbReference>
<dbReference type="PANTHER" id="PTHR42918">
    <property type="entry name" value="LYSYL-TRNA SYNTHETASE"/>
    <property type="match status" value="1"/>
</dbReference>
<dbReference type="Pfam" id="PF00152">
    <property type="entry name" value="tRNA-synt_2"/>
    <property type="match status" value="1"/>
</dbReference>
<dbReference type="PRINTS" id="PR00982">
    <property type="entry name" value="TRNASYNTHLYS"/>
</dbReference>
<dbReference type="SUPFAM" id="SSF55681">
    <property type="entry name" value="Class II aaRS and biotin synthetases"/>
    <property type="match status" value="1"/>
</dbReference>
<dbReference type="PROSITE" id="PS50862">
    <property type="entry name" value="AA_TRNA_LIGASE_II"/>
    <property type="match status" value="1"/>
</dbReference>
<accession>P0A8N9</accession>
<accession>P03812</accession>
<accession>P78141</accession>
<accession>Q8XDP9</accession>
<feature type="chain" id="PRO_0000152721" description="Elongation factor P--(R)-beta-lysine ligase">
    <location>
        <begin position="1"/>
        <end position="325"/>
    </location>
</feature>
<feature type="binding site" evidence="1">
    <location>
        <begin position="76"/>
        <end position="78"/>
    </location>
    <ligand>
        <name>substrate</name>
    </ligand>
</feature>
<feature type="binding site" evidence="1">
    <location>
        <begin position="100"/>
        <end position="102"/>
    </location>
    <ligand>
        <name>ATP</name>
        <dbReference type="ChEBI" id="CHEBI:30616"/>
    </ligand>
</feature>
<feature type="binding site" evidence="1">
    <location>
        <position position="109"/>
    </location>
    <ligand>
        <name>ATP</name>
        <dbReference type="ChEBI" id="CHEBI:30616"/>
    </ligand>
</feature>
<feature type="binding site" evidence="1">
    <location>
        <position position="118"/>
    </location>
    <ligand>
        <name>substrate</name>
    </ligand>
</feature>
<feature type="binding site" evidence="1">
    <location>
        <begin position="244"/>
        <end position="245"/>
    </location>
    <ligand>
        <name>ATP</name>
        <dbReference type="ChEBI" id="CHEBI:30616"/>
    </ligand>
</feature>
<feature type="binding site" evidence="1">
    <location>
        <position position="251"/>
    </location>
    <ligand>
        <name>substrate</name>
    </ligand>
</feature>
<feature type="binding site" evidence="1">
    <location>
        <position position="300"/>
    </location>
    <ligand>
        <name>ATP</name>
        <dbReference type="ChEBI" id="CHEBI:30616"/>
    </ligand>
</feature>
<reference key="1">
    <citation type="journal article" date="2001" name="Nature">
        <title>Genome sequence of enterohaemorrhagic Escherichia coli O157:H7.</title>
        <authorList>
            <person name="Perna N.T."/>
            <person name="Plunkett G. III"/>
            <person name="Burland V."/>
            <person name="Mau B."/>
            <person name="Glasner J.D."/>
            <person name="Rose D.J."/>
            <person name="Mayhew G.F."/>
            <person name="Evans P.S."/>
            <person name="Gregor J."/>
            <person name="Kirkpatrick H.A."/>
            <person name="Posfai G."/>
            <person name="Hackett J."/>
            <person name="Klink S."/>
            <person name="Boutin A."/>
            <person name="Shao Y."/>
            <person name="Miller L."/>
            <person name="Grotbeck E.J."/>
            <person name="Davis N.W."/>
            <person name="Lim A."/>
            <person name="Dimalanta E.T."/>
            <person name="Potamousis K."/>
            <person name="Apodaca J."/>
            <person name="Anantharaman T.S."/>
            <person name="Lin J."/>
            <person name="Yen G."/>
            <person name="Schwartz D.C."/>
            <person name="Welch R.A."/>
            <person name="Blattner F.R."/>
        </authorList>
    </citation>
    <scope>NUCLEOTIDE SEQUENCE [LARGE SCALE GENOMIC DNA]</scope>
    <source>
        <strain>O157:H7 / EDL933 / ATCC 700927 / EHEC</strain>
    </source>
</reference>
<reference key="2">
    <citation type="journal article" date="2001" name="DNA Res.">
        <title>Complete genome sequence of enterohemorrhagic Escherichia coli O157:H7 and genomic comparison with a laboratory strain K-12.</title>
        <authorList>
            <person name="Hayashi T."/>
            <person name="Makino K."/>
            <person name="Ohnishi M."/>
            <person name="Kurokawa K."/>
            <person name="Ishii K."/>
            <person name="Yokoyama K."/>
            <person name="Han C.-G."/>
            <person name="Ohtsubo E."/>
            <person name="Nakayama K."/>
            <person name="Murata T."/>
            <person name="Tanaka M."/>
            <person name="Tobe T."/>
            <person name="Iida T."/>
            <person name="Takami H."/>
            <person name="Honda T."/>
            <person name="Sasakawa C."/>
            <person name="Ogasawara N."/>
            <person name="Yasunaga T."/>
            <person name="Kuhara S."/>
            <person name="Shiba T."/>
            <person name="Hattori M."/>
            <person name="Shinagawa H."/>
        </authorList>
    </citation>
    <scope>NUCLEOTIDE SEQUENCE [LARGE SCALE GENOMIC DNA]</scope>
    <source>
        <strain>O157:H7 / Sakai / RIMD 0509952 / EHEC</strain>
    </source>
</reference>
<comment type="function">
    <text evidence="1">With EpmB is involved in the beta-lysylation step of the post-translational modification of translation elongation factor P (EF-P) on 'Lys-34'. Catalyzes the ATP-dependent activation of (R)-beta-lysine produced by EpmB, forming a lysyl-adenylate, from which the beta-lysyl moiety is then transferred to the epsilon-amino group of EF-P 'Lys-34'.</text>
</comment>
<comment type="catalytic activity">
    <reaction evidence="1">
        <text>D-beta-lysine + L-lysyl-[protein] + ATP = N(6)-((3R)-3,6-diaminohexanoyl)-L-lysyl-[protein] + AMP + diphosphate + H(+)</text>
        <dbReference type="Rhea" id="RHEA:83435"/>
        <dbReference type="Rhea" id="RHEA-COMP:9752"/>
        <dbReference type="Rhea" id="RHEA-COMP:20131"/>
        <dbReference type="ChEBI" id="CHEBI:15378"/>
        <dbReference type="ChEBI" id="CHEBI:29969"/>
        <dbReference type="ChEBI" id="CHEBI:30616"/>
        <dbReference type="ChEBI" id="CHEBI:33019"/>
        <dbReference type="ChEBI" id="CHEBI:84138"/>
        <dbReference type="ChEBI" id="CHEBI:156053"/>
        <dbReference type="ChEBI" id="CHEBI:456215"/>
    </reaction>
    <physiologicalReaction direction="left-to-right" evidence="1">
        <dbReference type="Rhea" id="RHEA:83436"/>
    </physiologicalReaction>
</comment>
<comment type="subunit">
    <text evidence="1">Homodimer.</text>
</comment>
<comment type="similarity">
    <text evidence="1">Belongs to the class-II aminoacyl-tRNA synthetase family. EpmA subfamily.</text>
</comment>
<comment type="sequence caution" evidence="2">
    <conflict type="erroneous initiation">
        <sequence resource="EMBL-CDS" id="AAG59356"/>
    </conflict>
    <text>Extended N-terminus.</text>
</comment>
<keyword id="KW-0067">ATP-binding</keyword>
<keyword id="KW-0436">Ligase</keyword>
<keyword id="KW-0547">Nucleotide-binding</keyword>
<keyword id="KW-1185">Reference proteome</keyword>
<name>EPMA_ECO57</name>
<evidence type="ECO:0000255" key="1">
    <source>
        <dbReference type="HAMAP-Rule" id="MF_00174"/>
    </source>
</evidence>
<evidence type="ECO:0000305" key="2"/>
<proteinExistence type="inferred from homology"/>
<protein>
    <recommendedName>
        <fullName evidence="1">Elongation factor P--(R)-beta-lysine ligase</fullName>
        <shortName evidence="1">EF-P--(R)-beta-lysine ligase</shortName>
        <ecNumber evidence="1">6.3.2.-</ecNumber>
    </recommendedName>
    <alternativeName>
        <fullName evidence="1">EF-P post-translational modification enzyme A</fullName>
    </alternativeName>
    <alternativeName>
        <fullName evidence="1">EF-P-lysine lysyltransferase</fullName>
    </alternativeName>
</protein>
<sequence>MSETASWQPSASIPNLLKRAAIMAEIRRFFADRGVLEVETPCMSQATVTDIHLVPFETRFVGPGHSQGMNLWLMTSPEYHMKRLLVAGCGPVFQLCRSFRNEEMGRYHNPEFTMLEWYRPHYDMYRLMNEVDDLLQQVLDCPAAESLSYQQAFLRYLEIDPLSADKTQLREVAAKLDLSNVADTEEDRDTLLQLLFTFGVEPNIGKEKPTFVYHFPASQASLAQISTEDHRVAERFEVYYKGIELANGFHELTDAREQQQRFEQDNRKRAARGLPQHPIDQNLIEALKVGMPDCSGVALGVDRLVMLALGAETLAEVIAFSVDRA</sequence>
<organism>
    <name type="scientific">Escherichia coli O157:H7</name>
    <dbReference type="NCBI Taxonomy" id="83334"/>
    <lineage>
        <taxon>Bacteria</taxon>
        <taxon>Pseudomonadati</taxon>
        <taxon>Pseudomonadota</taxon>
        <taxon>Gammaproteobacteria</taxon>
        <taxon>Enterobacterales</taxon>
        <taxon>Enterobacteriaceae</taxon>
        <taxon>Escherichia</taxon>
    </lineage>
</organism>
<gene>
    <name evidence="1" type="primary">epmA</name>
    <name type="synonym">yjeA</name>
    <name type="ordered locus">Z5763</name>
    <name type="ordered locus">ECs5136</name>
</gene>